<gene>
    <name type="primary">Fbxw2</name>
</gene>
<comment type="function">
    <text>Substrate-recognition component of the SCF (SKP1-CUL1-F-box protein)-type E3 ubiquitin ligase complex.</text>
</comment>
<comment type="subunit">
    <text evidence="1">Directly interacts with SKP1 and CUL1.</text>
</comment>
<comment type="tissue specificity">
    <text evidence="4">Widely expressed during embryogenesis and in adult tissues.</text>
</comment>
<keyword id="KW-0007">Acetylation</keyword>
<keyword id="KW-1185">Reference proteome</keyword>
<keyword id="KW-0677">Repeat</keyword>
<keyword id="KW-0833">Ubl conjugation pathway</keyword>
<keyword id="KW-0853">WD repeat</keyword>
<feature type="chain" id="PRO_0000050989" description="F-box/WD repeat-containing protein 2">
    <location>
        <begin position="1"/>
        <end position="422"/>
    </location>
</feature>
<feature type="domain" description="F-box" evidence="3">
    <location>
        <begin position="54"/>
        <end position="101"/>
    </location>
</feature>
<feature type="repeat" description="WD 1">
    <location>
        <begin position="146"/>
        <end position="183"/>
    </location>
</feature>
<feature type="repeat" description="WD 2">
    <location>
        <begin position="185"/>
        <end position="221"/>
    </location>
</feature>
<feature type="repeat" description="WD 3">
    <location>
        <begin position="224"/>
        <end position="265"/>
    </location>
</feature>
<feature type="repeat" description="WD 4">
    <location>
        <begin position="276"/>
        <end position="314"/>
    </location>
</feature>
<feature type="modified residue" description="N6-acetyllysine" evidence="2">
    <location>
        <position position="298"/>
    </location>
</feature>
<feature type="sequence conflict" description="In Ref. 1; CAA38237." evidence="5" ref="1">
    <original>T</original>
    <variation>M</variation>
    <location>
        <position position="21"/>
    </location>
</feature>
<feature type="sequence conflict" description="In Ref. 1; CAA38237." evidence="5" ref="1">
    <original>W</original>
    <variation>R</variation>
    <location>
        <position position="87"/>
    </location>
</feature>
<feature type="sequence conflict" description="In Ref. 1; CAA38237." evidence="5" ref="1">
    <original>S</original>
    <variation>T</variation>
    <location>
        <position position="413"/>
    </location>
</feature>
<dbReference type="EMBL" id="X54352">
    <property type="protein sequence ID" value="CAA38237.1"/>
    <property type="molecule type" value="mRNA"/>
</dbReference>
<dbReference type="EMBL" id="AL929106">
    <property type="status" value="NOT_ANNOTATED_CDS"/>
    <property type="molecule type" value="Genomic_DNA"/>
</dbReference>
<dbReference type="PIR" id="A56640">
    <property type="entry name" value="A56640"/>
</dbReference>
<dbReference type="SMR" id="Q60584"/>
<dbReference type="FunCoup" id="Q60584">
    <property type="interactions" value="2131"/>
</dbReference>
<dbReference type="STRING" id="10090.ENSMUSP00000028220"/>
<dbReference type="iPTMnet" id="Q60584"/>
<dbReference type="PhosphoSitePlus" id="Q60584"/>
<dbReference type="PaxDb" id="10090-ENSMUSP00000108703"/>
<dbReference type="ProteomicsDB" id="267719"/>
<dbReference type="UCSC" id="uc008jja.2">
    <property type="organism name" value="mouse"/>
</dbReference>
<dbReference type="AGR" id="MGI:1353435"/>
<dbReference type="MGI" id="MGI:1353435">
    <property type="gene designation" value="Fbxw2"/>
</dbReference>
<dbReference type="eggNOG" id="KOG0274">
    <property type="taxonomic scope" value="Eukaryota"/>
</dbReference>
<dbReference type="InParanoid" id="Q60584"/>
<dbReference type="Reactome" id="R-MMU-8951664">
    <property type="pathway name" value="Neddylation"/>
</dbReference>
<dbReference type="Reactome" id="R-MMU-983168">
    <property type="pathway name" value="Antigen processing: Ubiquitination &amp; Proteasome degradation"/>
</dbReference>
<dbReference type="ChiTaRS" id="Fbxw2">
    <property type="organism name" value="mouse"/>
</dbReference>
<dbReference type="PRO" id="PR:Q60584"/>
<dbReference type="Proteomes" id="UP000000589">
    <property type="component" value="Unplaced"/>
</dbReference>
<dbReference type="RNAct" id="Q60584">
    <property type="molecule type" value="protein"/>
</dbReference>
<dbReference type="GO" id="GO:0005737">
    <property type="term" value="C:cytoplasm"/>
    <property type="evidence" value="ECO:0000314"/>
    <property type="project" value="MGI"/>
</dbReference>
<dbReference type="CDD" id="cd22131">
    <property type="entry name" value="F-box_FBXW2"/>
    <property type="match status" value="1"/>
</dbReference>
<dbReference type="FunFam" id="2.130.10.10:FF:000151">
    <property type="entry name" value="F-box/WD repeat-containing protein 2 isoform X1"/>
    <property type="match status" value="1"/>
</dbReference>
<dbReference type="Gene3D" id="1.20.1280.50">
    <property type="match status" value="1"/>
</dbReference>
<dbReference type="Gene3D" id="2.130.10.10">
    <property type="entry name" value="YVTN repeat-like/Quinoprotein amine dehydrogenase"/>
    <property type="match status" value="1"/>
</dbReference>
<dbReference type="InterPro" id="IPR036047">
    <property type="entry name" value="F-box-like_dom_sf"/>
</dbReference>
<dbReference type="InterPro" id="IPR001810">
    <property type="entry name" value="F-box_dom"/>
</dbReference>
<dbReference type="InterPro" id="IPR042627">
    <property type="entry name" value="FBXW2"/>
</dbReference>
<dbReference type="InterPro" id="IPR020472">
    <property type="entry name" value="G-protein_beta_WD-40_rep"/>
</dbReference>
<dbReference type="InterPro" id="IPR015943">
    <property type="entry name" value="WD40/YVTN_repeat-like_dom_sf"/>
</dbReference>
<dbReference type="InterPro" id="IPR019775">
    <property type="entry name" value="WD40_repeat_CS"/>
</dbReference>
<dbReference type="InterPro" id="IPR036322">
    <property type="entry name" value="WD40_repeat_dom_sf"/>
</dbReference>
<dbReference type="InterPro" id="IPR001680">
    <property type="entry name" value="WD40_rpt"/>
</dbReference>
<dbReference type="PANTHER" id="PTHR44436">
    <property type="entry name" value="F-BOX/WD REPEAT-CONTAINING PROTEIN 2"/>
    <property type="match status" value="1"/>
</dbReference>
<dbReference type="PANTHER" id="PTHR44436:SF1">
    <property type="entry name" value="F-BOX_WD REPEAT-CONTAINING PROTEIN 2"/>
    <property type="match status" value="1"/>
</dbReference>
<dbReference type="Pfam" id="PF12937">
    <property type="entry name" value="F-box-like"/>
    <property type="match status" value="1"/>
</dbReference>
<dbReference type="Pfam" id="PF00400">
    <property type="entry name" value="WD40"/>
    <property type="match status" value="4"/>
</dbReference>
<dbReference type="PRINTS" id="PR00320">
    <property type="entry name" value="GPROTEINBRPT"/>
</dbReference>
<dbReference type="SMART" id="SM00256">
    <property type="entry name" value="FBOX"/>
    <property type="match status" value="1"/>
</dbReference>
<dbReference type="SMART" id="SM00320">
    <property type="entry name" value="WD40"/>
    <property type="match status" value="5"/>
</dbReference>
<dbReference type="SUPFAM" id="SSF81383">
    <property type="entry name" value="F-box domain"/>
    <property type="match status" value="1"/>
</dbReference>
<dbReference type="SUPFAM" id="SSF50978">
    <property type="entry name" value="WD40 repeat-like"/>
    <property type="match status" value="1"/>
</dbReference>
<dbReference type="PROSITE" id="PS50181">
    <property type="entry name" value="FBOX"/>
    <property type="match status" value="1"/>
</dbReference>
<dbReference type="PROSITE" id="PS00678">
    <property type="entry name" value="WD_REPEATS_1"/>
    <property type="match status" value="1"/>
</dbReference>
<dbReference type="PROSITE" id="PS50082">
    <property type="entry name" value="WD_REPEATS_2"/>
    <property type="match status" value="2"/>
</dbReference>
<dbReference type="PROSITE" id="PS50294">
    <property type="entry name" value="WD_REPEATS_REGION"/>
    <property type="match status" value="1"/>
</dbReference>
<reference key="1">
    <citation type="journal article" date="1992" name="DNA Seq.">
        <title>Secondary structure analysis identifies a putative mouse protein demonstrating similarity to the repeat units found in CDC4, the G protein beta subunits and related proteins.</title>
        <authorList>
            <person name="Duff K.E.K."/>
            <person name="Parsons J."/>
            <person name="Hodgman T.C."/>
        </authorList>
    </citation>
    <scope>NUCLEOTIDE SEQUENCE [MRNA]</scope>
    <source>
        <strain>BALB/cJ</strain>
        <tissue>Heart</tissue>
    </source>
</reference>
<reference key="2">
    <citation type="journal article" date="2009" name="PLoS Biol.">
        <title>Lineage-specific biology revealed by a finished genome assembly of the mouse.</title>
        <authorList>
            <person name="Church D.M."/>
            <person name="Goodstadt L."/>
            <person name="Hillier L.W."/>
            <person name="Zody M.C."/>
            <person name="Goldstein S."/>
            <person name="She X."/>
            <person name="Bult C.J."/>
            <person name="Agarwala R."/>
            <person name="Cherry J.L."/>
            <person name="DiCuccio M."/>
            <person name="Hlavina W."/>
            <person name="Kapustin Y."/>
            <person name="Meric P."/>
            <person name="Maglott D."/>
            <person name="Birtle Z."/>
            <person name="Marques A.C."/>
            <person name="Graves T."/>
            <person name="Zhou S."/>
            <person name="Teague B."/>
            <person name="Potamousis K."/>
            <person name="Churas C."/>
            <person name="Place M."/>
            <person name="Herschleb J."/>
            <person name="Runnheim R."/>
            <person name="Forrest D."/>
            <person name="Amos-Landgraf J."/>
            <person name="Schwartz D.C."/>
            <person name="Cheng Z."/>
            <person name="Lindblad-Toh K."/>
            <person name="Eichler E.E."/>
            <person name="Ponting C.P."/>
        </authorList>
    </citation>
    <scope>NUCLEOTIDE SEQUENCE [LARGE SCALE GENOMIC DNA]</scope>
    <source>
        <strain>C57BL/6J</strain>
    </source>
</reference>
<reference key="3">
    <citation type="journal article" date="1999" name="Curr. Biol.">
        <title>A family of mammalian F-box proteins.</title>
        <authorList>
            <person name="Winston J.T."/>
            <person name="Koepp D.M."/>
            <person name="Zhu C."/>
            <person name="Elledge S.J."/>
            <person name="Harper J.W."/>
        </authorList>
    </citation>
    <scope>TISSUE SPECIFICITY</scope>
</reference>
<accession>Q60584</accession>
<accession>E9PXP3</accession>
<proteinExistence type="evidence at transcript level"/>
<evidence type="ECO:0000250" key="1"/>
<evidence type="ECO:0000250" key="2">
    <source>
        <dbReference type="UniProtKB" id="Q9UKT8"/>
    </source>
</evidence>
<evidence type="ECO:0000255" key="3">
    <source>
        <dbReference type="PROSITE-ProRule" id="PRU00080"/>
    </source>
</evidence>
<evidence type="ECO:0000269" key="4">
    <source>
    </source>
</evidence>
<evidence type="ECO:0000305" key="5"/>
<sequence>MERKDFETWLDNISVTFLSLTDLQKNETLDHLISLSGAVQLRHLSNNLETLLKRDFLKLLPLELSFYLLKWLDPQTLLTCCLVSKQWNKVISACTEVWQTACKNLGWQIDDSVQDSLHWKKVYLKAILRMKQLEDHEAFETSSLIGHSARVYALYYKDGLLCTGSDDLSAKLWDVSTGQCVYGIQTHTCAAVKFDEQKLVTGSFDNTVACWEWSSGARTQHFRGHTGAVFSVDYSDELDILVSGSADFAVKVWALSAGTCLNTLTGHTEWVTKVVLQKCKVKSLLHSPGDYILLSADKYEIKIWPIGREINCKCLKTLSVSEDRSICLQPRLHFDGKYIVCSSALGLYQWDFASYDILRVIKTPEVANLALLGFGDVFALLFDNHYLYIMDLRTESLISRWPLPEYRKSKRGSSFLAGERPG</sequence>
<protein>
    <recommendedName>
        <fullName>F-box/WD repeat-containing protein 2</fullName>
    </recommendedName>
    <alternativeName>
        <fullName>F-box and WD-40 domain-containing protein 2</fullName>
    </alternativeName>
    <alternativeName>
        <fullName>Protein MD6</fullName>
    </alternativeName>
</protein>
<organism>
    <name type="scientific">Mus musculus</name>
    <name type="common">Mouse</name>
    <dbReference type="NCBI Taxonomy" id="10090"/>
    <lineage>
        <taxon>Eukaryota</taxon>
        <taxon>Metazoa</taxon>
        <taxon>Chordata</taxon>
        <taxon>Craniata</taxon>
        <taxon>Vertebrata</taxon>
        <taxon>Euteleostomi</taxon>
        <taxon>Mammalia</taxon>
        <taxon>Eutheria</taxon>
        <taxon>Euarchontoglires</taxon>
        <taxon>Glires</taxon>
        <taxon>Rodentia</taxon>
        <taxon>Myomorpha</taxon>
        <taxon>Muroidea</taxon>
        <taxon>Muridae</taxon>
        <taxon>Murinae</taxon>
        <taxon>Mus</taxon>
        <taxon>Mus</taxon>
    </lineage>
</organism>
<name>FBXW2_MOUSE</name>